<evidence type="ECO:0000255" key="1">
    <source>
        <dbReference type="HAMAP-Rule" id="MF_00391"/>
    </source>
</evidence>
<evidence type="ECO:0000256" key="2">
    <source>
        <dbReference type="SAM" id="MobiDB-lite"/>
    </source>
</evidence>
<evidence type="ECO:0000305" key="3"/>
<proteinExistence type="inferred from homology"/>
<feature type="chain" id="PRO_1000013461" description="Large ribosomal subunit protein bL34">
    <location>
        <begin position="1"/>
        <end position="44"/>
    </location>
</feature>
<feature type="region of interest" description="Disordered" evidence="2">
    <location>
        <begin position="1"/>
        <end position="44"/>
    </location>
</feature>
<organism>
    <name type="scientific">Streptococcus agalactiae serotype Ia (strain ATCC 27591 / A909 / CDC SS700)</name>
    <dbReference type="NCBI Taxonomy" id="205921"/>
    <lineage>
        <taxon>Bacteria</taxon>
        <taxon>Bacillati</taxon>
        <taxon>Bacillota</taxon>
        <taxon>Bacilli</taxon>
        <taxon>Lactobacillales</taxon>
        <taxon>Streptococcaceae</taxon>
        <taxon>Streptococcus</taxon>
    </lineage>
</organism>
<reference key="1">
    <citation type="journal article" date="2005" name="Proc. Natl. Acad. Sci. U.S.A.">
        <title>Genome analysis of multiple pathogenic isolates of Streptococcus agalactiae: implications for the microbial 'pan-genome'.</title>
        <authorList>
            <person name="Tettelin H."/>
            <person name="Masignani V."/>
            <person name="Cieslewicz M.J."/>
            <person name="Donati C."/>
            <person name="Medini D."/>
            <person name="Ward N.L."/>
            <person name="Angiuoli S.V."/>
            <person name="Crabtree J."/>
            <person name="Jones A.L."/>
            <person name="Durkin A.S."/>
            <person name="DeBoy R.T."/>
            <person name="Davidsen T.M."/>
            <person name="Mora M."/>
            <person name="Scarselli M."/>
            <person name="Margarit y Ros I."/>
            <person name="Peterson J.D."/>
            <person name="Hauser C.R."/>
            <person name="Sundaram J.P."/>
            <person name="Nelson W.C."/>
            <person name="Madupu R."/>
            <person name="Brinkac L.M."/>
            <person name="Dodson R.J."/>
            <person name="Rosovitz M.J."/>
            <person name="Sullivan S.A."/>
            <person name="Daugherty S.C."/>
            <person name="Haft D.H."/>
            <person name="Selengut J."/>
            <person name="Gwinn M.L."/>
            <person name="Zhou L."/>
            <person name="Zafar N."/>
            <person name="Khouri H."/>
            <person name="Radune D."/>
            <person name="Dimitrov G."/>
            <person name="Watkins K."/>
            <person name="O'Connor K.J."/>
            <person name="Smith S."/>
            <person name="Utterback T.R."/>
            <person name="White O."/>
            <person name="Rubens C.E."/>
            <person name="Grandi G."/>
            <person name="Madoff L.C."/>
            <person name="Kasper D.L."/>
            <person name="Telford J.L."/>
            <person name="Wessels M.R."/>
            <person name="Rappuoli R."/>
            <person name="Fraser C.M."/>
        </authorList>
    </citation>
    <scope>NUCLEOTIDE SEQUENCE [LARGE SCALE GENOMIC DNA]</scope>
    <source>
        <strain>ATCC 27591 / A909 / CDC SS700</strain>
    </source>
</reference>
<accession>Q3JZ91</accession>
<gene>
    <name evidence="1" type="primary">rpmH</name>
    <name type="ordered locus">SAK_1815</name>
</gene>
<sequence length="44" mass="5377">MKRTYQPSKIRRQRKHGFRHRMSTKNGRRVLASRRRKGRKVLSA</sequence>
<keyword id="KW-0687">Ribonucleoprotein</keyword>
<keyword id="KW-0689">Ribosomal protein</keyword>
<dbReference type="EMBL" id="CP000114">
    <property type="protein sequence ID" value="ABA46169.1"/>
    <property type="molecule type" value="Genomic_DNA"/>
</dbReference>
<dbReference type="RefSeq" id="WP_000831903.1">
    <property type="nucleotide sequence ID" value="NC_007432.1"/>
</dbReference>
<dbReference type="SMR" id="Q3JZ91"/>
<dbReference type="GeneID" id="98394107"/>
<dbReference type="KEGG" id="sak:SAK_1815"/>
<dbReference type="HOGENOM" id="CLU_129938_2_0_9"/>
<dbReference type="GO" id="GO:1990904">
    <property type="term" value="C:ribonucleoprotein complex"/>
    <property type="evidence" value="ECO:0007669"/>
    <property type="project" value="UniProtKB-KW"/>
</dbReference>
<dbReference type="GO" id="GO:0005840">
    <property type="term" value="C:ribosome"/>
    <property type="evidence" value="ECO:0007669"/>
    <property type="project" value="UniProtKB-KW"/>
</dbReference>
<dbReference type="GO" id="GO:0003735">
    <property type="term" value="F:structural constituent of ribosome"/>
    <property type="evidence" value="ECO:0007669"/>
    <property type="project" value="InterPro"/>
</dbReference>
<dbReference type="GO" id="GO:0006412">
    <property type="term" value="P:translation"/>
    <property type="evidence" value="ECO:0007669"/>
    <property type="project" value="UniProtKB-UniRule"/>
</dbReference>
<dbReference type="FunFam" id="1.10.287.3980:FF:000001">
    <property type="entry name" value="Mitochondrial ribosomal protein L34"/>
    <property type="match status" value="1"/>
</dbReference>
<dbReference type="Gene3D" id="1.10.287.3980">
    <property type="match status" value="1"/>
</dbReference>
<dbReference type="HAMAP" id="MF_00391">
    <property type="entry name" value="Ribosomal_bL34"/>
    <property type="match status" value="1"/>
</dbReference>
<dbReference type="InterPro" id="IPR000271">
    <property type="entry name" value="Ribosomal_bL34"/>
</dbReference>
<dbReference type="InterPro" id="IPR020939">
    <property type="entry name" value="Ribosomal_bL34_CS"/>
</dbReference>
<dbReference type="NCBIfam" id="TIGR01030">
    <property type="entry name" value="rpmH_bact"/>
    <property type="match status" value="1"/>
</dbReference>
<dbReference type="PANTHER" id="PTHR14503:SF4">
    <property type="entry name" value="LARGE RIBOSOMAL SUBUNIT PROTEIN BL34M"/>
    <property type="match status" value="1"/>
</dbReference>
<dbReference type="PANTHER" id="PTHR14503">
    <property type="entry name" value="MITOCHONDRIAL RIBOSOMAL PROTEIN 34 FAMILY MEMBER"/>
    <property type="match status" value="1"/>
</dbReference>
<dbReference type="Pfam" id="PF00468">
    <property type="entry name" value="Ribosomal_L34"/>
    <property type="match status" value="1"/>
</dbReference>
<dbReference type="PROSITE" id="PS00784">
    <property type="entry name" value="RIBOSOMAL_L34"/>
    <property type="match status" value="1"/>
</dbReference>
<protein>
    <recommendedName>
        <fullName evidence="1">Large ribosomal subunit protein bL34</fullName>
    </recommendedName>
    <alternativeName>
        <fullName evidence="3">50S ribosomal protein L34</fullName>
    </alternativeName>
</protein>
<comment type="similarity">
    <text evidence="1">Belongs to the bacterial ribosomal protein bL34 family.</text>
</comment>
<name>RL34_STRA1</name>